<gene>
    <name evidence="1" type="primary">murC</name>
    <name type="ordered locus">BPSL3024</name>
</gene>
<organism>
    <name type="scientific">Burkholderia pseudomallei (strain K96243)</name>
    <dbReference type="NCBI Taxonomy" id="272560"/>
    <lineage>
        <taxon>Bacteria</taxon>
        <taxon>Pseudomonadati</taxon>
        <taxon>Pseudomonadota</taxon>
        <taxon>Betaproteobacteria</taxon>
        <taxon>Burkholderiales</taxon>
        <taxon>Burkholderiaceae</taxon>
        <taxon>Burkholderia</taxon>
        <taxon>pseudomallei group</taxon>
    </lineage>
</organism>
<protein>
    <recommendedName>
        <fullName evidence="1">UDP-N-acetylmuramate--L-alanine ligase</fullName>
        <ecNumber evidence="1">6.3.2.8</ecNumber>
    </recommendedName>
    <alternativeName>
        <fullName evidence="1">UDP-N-acetylmuramoyl-L-alanine synthetase</fullName>
    </alternativeName>
</protein>
<reference key="1">
    <citation type="journal article" date="2004" name="Proc. Natl. Acad. Sci. U.S.A.">
        <title>Genomic plasticity of the causative agent of melioidosis, Burkholderia pseudomallei.</title>
        <authorList>
            <person name="Holden M.T.G."/>
            <person name="Titball R.W."/>
            <person name="Peacock S.J."/>
            <person name="Cerdeno-Tarraga A.-M."/>
            <person name="Atkins T."/>
            <person name="Crossman L.C."/>
            <person name="Pitt T."/>
            <person name="Churcher C."/>
            <person name="Mungall K.L."/>
            <person name="Bentley S.D."/>
            <person name="Sebaihia M."/>
            <person name="Thomson N.R."/>
            <person name="Bason N."/>
            <person name="Beacham I.R."/>
            <person name="Brooks K."/>
            <person name="Brown K.A."/>
            <person name="Brown N.F."/>
            <person name="Challis G.L."/>
            <person name="Cherevach I."/>
            <person name="Chillingworth T."/>
            <person name="Cronin A."/>
            <person name="Crossett B."/>
            <person name="Davis P."/>
            <person name="DeShazer D."/>
            <person name="Feltwell T."/>
            <person name="Fraser A."/>
            <person name="Hance Z."/>
            <person name="Hauser H."/>
            <person name="Holroyd S."/>
            <person name="Jagels K."/>
            <person name="Keith K.E."/>
            <person name="Maddison M."/>
            <person name="Moule S."/>
            <person name="Price C."/>
            <person name="Quail M.A."/>
            <person name="Rabbinowitsch E."/>
            <person name="Rutherford K."/>
            <person name="Sanders M."/>
            <person name="Simmonds M."/>
            <person name="Songsivilai S."/>
            <person name="Stevens K."/>
            <person name="Tumapa S."/>
            <person name="Vesaratchavest M."/>
            <person name="Whitehead S."/>
            <person name="Yeats C."/>
            <person name="Barrell B.G."/>
            <person name="Oyston P.C.F."/>
            <person name="Parkhill J."/>
        </authorList>
    </citation>
    <scope>NUCLEOTIDE SEQUENCE [LARGE SCALE GENOMIC DNA]</scope>
    <source>
        <strain>K96243</strain>
    </source>
</reference>
<dbReference type="EC" id="6.3.2.8" evidence="1"/>
<dbReference type="EMBL" id="BX571965">
    <property type="protein sequence ID" value="CAH37036.1"/>
    <property type="molecule type" value="Genomic_DNA"/>
</dbReference>
<dbReference type="RefSeq" id="WP_004522018.1">
    <property type="nucleotide sequence ID" value="NZ_CP009538.1"/>
</dbReference>
<dbReference type="RefSeq" id="YP_109620.1">
    <property type="nucleotide sequence ID" value="NC_006350.1"/>
</dbReference>
<dbReference type="SMR" id="Q63QJ8"/>
<dbReference type="STRING" id="272560.BPSL3024"/>
<dbReference type="GeneID" id="93061626"/>
<dbReference type="KEGG" id="bps:BPSL3024"/>
<dbReference type="PATRIC" id="fig|272560.51.peg.2242"/>
<dbReference type="eggNOG" id="COG0773">
    <property type="taxonomic scope" value="Bacteria"/>
</dbReference>
<dbReference type="UniPathway" id="UPA00219"/>
<dbReference type="Proteomes" id="UP000000605">
    <property type="component" value="Chromosome 1"/>
</dbReference>
<dbReference type="GO" id="GO:0005737">
    <property type="term" value="C:cytoplasm"/>
    <property type="evidence" value="ECO:0007669"/>
    <property type="project" value="UniProtKB-SubCell"/>
</dbReference>
<dbReference type="GO" id="GO:0005524">
    <property type="term" value="F:ATP binding"/>
    <property type="evidence" value="ECO:0007669"/>
    <property type="project" value="UniProtKB-UniRule"/>
</dbReference>
<dbReference type="GO" id="GO:0008763">
    <property type="term" value="F:UDP-N-acetylmuramate-L-alanine ligase activity"/>
    <property type="evidence" value="ECO:0007669"/>
    <property type="project" value="UniProtKB-UniRule"/>
</dbReference>
<dbReference type="GO" id="GO:0051301">
    <property type="term" value="P:cell division"/>
    <property type="evidence" value="ECO:0007669"/>
    <property type="project" value="UniProtKB-KW"/>
</dbReference>
<dbReference type="GO" id="GO:0071555">
    <property type="term" value="P:cell wall organization"/>
    <property type="evidence" value="ECO:0007669"/>
    <property type="project" value="UniProtKB-KW"/>
</dbReference>
<dbReference type="GO" id="GO:0009252">
    <property type="term" value="P:peptidoglycan biosynthetic process"/>
    <property type="evidence" value="ECO:0007669"/>
    <property type="project" value="UniProtKB-UniRule"/>
</dbReference>
<dbReference type="GO" id="GO:0008360">
    <property type="term" value="P:regulation of cell shape"/>
    <property type="evidence" value="ECO:0007669"/>
    <property type="project" value="UniProtKB-KW"/>
</dbReference>
<dbReference type="FunFam" id="3.40.1190.10:FF:000001">
    <property type="entry name" value="UDP-N-acetylmuramate--L-alanine ligase"/>
    <property type="match status" value="1"/>
</dbReference>
<dbReference type="Gene3D" id="3.90.190.20">
    <property type="entry name" value="Mur ligase, C-terminal domain"/>
    <property type="match status" value="1"/>
</dbReference>
<dbReference type="Gene3D" id="3.40.1190.10">
    <property type="entry name" value="Mur-like, catalytic domain"/>
    <property type="match status" value="1"/>
</dbReference>
<dbReference type="Gene3D" id="3.40.50.720">
    <property type="entry name" value="NAD(P)-binding Rossmann-like Domain"/>
    <property type="match status" value="1"/>
</dbReference>
<dbReference type="HAMAP" id="MF_00046">
    <property type="entry name" value="MurC"/>
    <property type="match status" value="1"/>
</dbReference>
<dbReference type="InterPro" id="IPR036565">
    <property type="entry name" value="Mur-like_cat_sf"/>
</dbReference>
<dbReference type="InterPro" id="IPR004101">
    <property type="entry name" value="Mur_ligase_C"/>
</dbReference>
<dbReference type="InterPro" id="IPR036615">
    <property type="entry name" value="Mur_ligase_C_dom_sf"/>
</dbReference>
<dbReference type="InterPro" id="IPR013221">
    <property type="entry name" value="Mur_ligase_cen"/>
</dbReference>
<dbReference type="InterPro" id="IPR000713">
    <property type="entry name" value="Mur_ligase_N"/>
</dbReference>
<dbReference type="InterPro" id="IPR050061">
    <property type="entry name" value="MurCDEF_pg_biosynth"/>
</dbReference>
<dbReference type="InterPro" id="IPR005758">
    <property type="entry name" value="UDP-N-AcMur_Ala_ligase_MurC"/>
</dbReference>
<dbReference type="NCBIfam" id="TIGR01082">
    <property type="entry name" value="murC"/>
    <property type="match status" value="1"/>
</dbReference>
<dbReference type="PANTHER" id="PTHR43445:SF3">
    <property type="entry name" value="UDP-N-ACETYLMURAMATE--L-ALANINE LIGASE"/>
    <property type="match status" value="1"/>
</dbReference>
<dbReference type="PANTHER" id="PTHR43445">
    <property type="entry name" value="UDP-N-ACETYLMURAMATE--L-ALANINE LIGASE-RELATED"/>
    <property type="match status" value="1"/>
</dbReference>
<dbReference type="Pfam" id="PF01225">
    <property type="entry name" value="Mur_ligase"/>
    <property type="match status" value="1"/>
</dbReference>
<dbReference type="Pfam" id="PF02875">
    <property type="entry name" value="Mur_ligase_C"/>
    <property type="match status" value="1"/>
</dbReference>
<dbReference type="Pfam" id="PF08245">
    <property type="entry name" value="Mur_ligase_M"/>
    <property type="match status" value="1"/>
</dbReference>
<dbReference type="SUPFAM" id="SSF51984">
    <property type="entry name" value="MurCD N-terminal domain"/>
    <property type="match status" value="1"/>
</dbReference>
<dbReference type="SUPFAM" id="SSF53623">
    <property type="entry name" value="MurD-like peptide ligases, catalytic domain"/>
    <property type="match status" value="1"/>
</dbReference>
<dbReference type="SUPFAM" id="SSF53244">
    <property type="entry name" value="MurD-like peptide ligases, peptide-binding domain"/>
    <property type="match status" value="1"/>
</dbReference>
<sequence length="465" mass="49026">MKHIVKHIHFVGIGGAGMSGIAEVLVNLGYQVSGSDLARNAVTERLEALGARVSIGHDAANIEGANAVVVSTAVRSDNPEVLAARRLRVPIVPRAVMLAELMRLKQGIAIAGTHGKTTTTSLVASVLAAGGLDPTFVIGGRLTSAGANARLGTGDFIVAEADESDASFLNLYPVIEVITNIDADHMDTYGHDFARLKQAFIEFTQRLPFYGSAVVCIDDANVRQIVPLISKPVVRYGFAADAQVRAENVEARDGRMHFTVRREGREPLPVVLNLPGLHNVQNALAAIAIATDLDVADAAIQQALAEFNGVGRRFQRYGEIAAAGGGAYTLIDDYGHHPVEMAATIAAARGAFPGRRLVLAFQPHRYTRTRDCFDDFVNVLSTVDALVLTEVYAAGEAPISTANGDALSRALRAAGKVEPVFVATVDEVPDALAKLARDGDVVITMGAGSIGGVPGKLAQDTQQKG</sequence>
<name>MURC_BURPS</name>
<accession>Q63QJ8</accession>
<proteinExistence type="inferred from homology"/>
<keyword id="KW-0067">ATP-binding</keyword>
<keyword id="KW-0131">Cell cycle</keyword>
<keyword id="KW-0132">Cell division</keyword>
<keyword id="KW-0133">Cell shape</keyword>
<keyword id="KW-0961">Cell wall biogenesis/degradation</keyword>
<keyword id="KW-0963">Cytoplasm</keyword>
<keyword id="KW-0436">Ligase</keyword>
<keyword id="KW-0547">Nucleotide-binding</keyword>
<keyword id="KW-0573">Peptidoglycan synthesis</keyword>
<keyword id="KW-1185">Reference proteome</keyword>
<evidence type="ECO:0000255" key="1">
    <source>
        <dbReference type="HAMAP-Rule" id="MF_00046"/>
    </source>
</evidence>
<comment type="function">
    <text evidence="1">Cell wall formation.</text>
</comment>
<comment type="catalytic activity">
    <reaction evidence="1">
        <text>UDP-N-acetyl-alpha-D-muramate + L-alanine + ATP = UDP-N-acetyl-alpha-D-muramoyl-L-alanine + ADP + phosphate + H(+)</text>
        <dbReference type="Rhea" id="RHEA:23372"/>
        <dbReference type="ChEBI" id="CHEBI:15378"/>
        <dbReference type="ChEBI" id="CHEBI:30616"/>
        <dbReference type="ChEBI" id="CHEBI:43474"/>
        <dbReference type="ChEBI" id="CHEBI:57972"/>
        <dbReference type="ChEBI" id="CHEBI:70757"/>
        <dbReference type="ChEBI" id="CHEBI:83898"/>
        <dbReference type="ChEBI" id="CHEBI:456216"/>
        <dbReference type="EC" id="6.3.2.8"/>
    </reaction>
</comment>
<comment type="pathway">
    <text evidence="1">Cell wall biogenesis; peptidoglycan biosynthesis.</text>
</comment>
<comment type="subcellular location">
    <subcellularLocation>
        <location evidence="1">Cytoplasm</location>
    </subcellularLocation>
</comment>
<comment type="similarity">
    <text evidence="1">Belongs to the MurCDEF family.</text>
</comment>
<feature type="chain" id="PRO_0000182072" description="UDP-N-acetylmuramate--L-alanine ligase">
    <location>
        <begin position="1"/>
        <end position="465"/>
    </location>
</feature>
<feature type="binding site" evidence="1">
    <location>
        <begin position="112"/>
        <end position="118"/>
    </location>
    <ligand>
        <name>ATP</name>
        <dbReference type="ChEBI" id="CHEBI:30616"/>
    </ligand>
</feature>